<name>RL2_BACCR</name>
<feature type="chain" id="PRO_0000129526" description="Large ribosomal subunit protein uL2">
    <location>
        <begin position="1"/>
        <end position="276"/>
    </location>
</feature>
<feature type="region of interest" description="Disordered" evidence="2">
    <location>
        <begin position="1"/>
        <end position="20"/>
    </location>
</feature>
<feature type="region of interest" description="Disordered" evidence="2">
    <location>
        <begin position="219"/>
        <end position="276"/>
    </location>
</feature>
<feature type="compositionally biased region" description="Polar residues" evidence="2">
    <location>
        <begin position="7"/>
        <end position="20"/>
    </location>
</feature>
<accession>Q81J39</accession>
<keyword id="KW-1185">Reference proteome</keyword>
<keyword id="KW-0687">Ribonucleoprotein</keyword>
<keyword id="KW-0689">Ribosomal protein</keyword>
<keyword id="KW-0694">RNA-binding</keyword>
<keyword id="KW-0699">rRNA-binding</keyword>
<organism>
    <name type="scientific">Bacillus cereus (strain ATCC 14579 / DSM 31 / CCUG 7414 / JCM 2152 / NBRC 15305 / NCIMB 9373 / NCTC 2599 / NRRL B-3711)</name>
    <dbReference type="NCBI Taxonomy" id="226900"/>
    <lineage>
        <taxon>Bacteria</taxon>
        <taxon>Bacillati</taxon>
        <taxon>Bacillota</taxon>
        <taxon>Bacilli</taxon>
        <taxon>Bacillales</taxon>
        <taxon>Bacillaceae</taxon>
        <taxon>Bacillus</taxon>
        <taxon>Bacillus cereus group</taxon>
    </lineage>
</organism>
<reference key="1">
    <citation type="journal article" date="2003" name="Nature">
        <title>Genome sequence of Bacillus cereus and comparative analysis with Bacillus anthracis.</title>
        <authorList>
            <person name="Ivanova N."/>
            <person name="Sorokin A."/>
            <person name="Anderson I."/>
            <person name="Galleron N."/>
            <person name="Candelon B."/>
            <person name="Kapatral V."/>
            <person name="Bhattacharyya A."/>
            <person name="Reznik G."/>
            <person name="Mikhailova N."/>
            <person name="Lapidus A."/>
            <person name="Chu L."/>
            <person name="Mazur M."/>
            <person name="Goltsman E."/>
            <person name="Larsen N."/>
            <person name="D'Souza M."/>
            <person name="Walunas T."/>
            <person name="Grechkin Y."/>
            <person name="Pusch G."/>
            <person name="Haselkorn R."/>
            <person name="Fonstein M."/>
            <person name="Ehrlich S.D."/>
            <person name="Overbeek R."/>
            <person name="Kyrpides N.C."/>
        </authorList>
    </citation>
    <scope>NUCLEOTIDE SEQUENCE [LARGE SCALE GENOMIC DNA]</scope>
    <source>
        <strain>ATCC 14579 / DSM 31 / CCUG 7414 / JCM 2152 / NBRC 15305 / NCIMB 9373 / NCTC 2599 / NRRL B-3711</strain>
    </source>
</reference>
<proteinExistence type="inferred from homology"/>
<dbReference type="EMBL" id="AE016877">
    <property type="protein sequence ID" value="AAP07215.1"/>
    <property type="molecule type" value="Genomic_DNA"/>
</dbReference>
<dbReference type="RefSeq" id="NP_830014.1">
    <property type="nucleotide sequence ID" value="NC_004722.1"/>
</dbReference>
<dbReference type="RefSeq" id="WP_000511583.1">
    <property type="nucleotide sequence ID" value="NZ_CP138336.1"/>
</dbReference>
<dbReference type="SMR" id="Q81J39"/>
<dbReference type="STRING" id="226900.BC_0134"/>
<dbReference type="MetOSite" id="Q81J39"/>
<dbReference type="GeneID" id="72446931"/>
<dbReference type="KEGG" id="bce:BC0134"/>
<dbReference type="PATRIC" id="fig|226900.8.peg.135"/>
<dbReference type="HOGENOM" id="CLU_036235_2_1_9"/>
<dbReference type="OrthoDB" id="9778722at2"/>
<dbReference type="PRO" id="PR:Q81J39"/>
<dbReference type="Proteomes" id="UP000001417">
    <property type="component" value="Chromosome"/>
</dbReference>
<dbReference type="GO" id="GO:0015934">
    <property type="term" value="C:large ribosomal subunit"/>
    <property type="evidence" value="ECO:0007669"/>
    <property type="project" value="InterPro"/>
</dbReference>
<dbReference type="GO" id="GO:0003723">
    <property type="term" value="F:RNA binding"/>
    <property type="evidence" value="ECO:0000318"/>
    <property type="project" value="GO_Central"/>
</dbReference>
<dbReference type="GO" id="GO:0019843">
    <property type="term" value="F:rRNA binding"/>
    <property type="evidence" value="ECO:0007669"/>
    <property type="project" value="UniProtKB-UniRule"/>
</dbReference>
<dbReference type="GO" id="GO:0003735">
    <property type="term" value="F:structural constituent of ribosome"/>
    <property type="evidence" value="ECO:0000318"/>
    <property type="project" value="GO_Central"/>
</dbReference>
<dbReference type="GO" id="GO:0016740">
    <property type="term" value="F:transferase activity"/>
    <property type="evidence" value="ECO:0007669"/>
    <property type="project" value="InterPro"/>
</dbReference>
<dbReference type="GO" id="GO:0002181">
    <property type="term" value="P:cytoplasmic translation"/>
    <property type="evidence" value="ECO:0000318"/>
    <property type="project" value="GO_Central"/>
</dbReference>
<dbReference type="FunFam" id="2.30.30.30:FF:000001">
    <property type="entry name" value="50S ribosomal protein L2"/>
    <property type="match status" value="1"/>
</dbReference>
<dbReference type="FunFam" id="2.40.50.140:FF:000003">
    <property type="entry name" value="50S ribosomal protein L2"/>
    <property type="match status" value="1"/>
</dbReference>
<dbReference type="FunFam" id="4.10.950.10:FF:000001">
    <property type="entry name" value="50S ribosomal protein L2"/>
    <property type="match status" value="1"/>
</dbReference>
<dbReference type="Gene3D" id="2.30.30.30">
    <property type="match status" value="1"/>
</dbReference>
<dbReference type="Gene3D" id="2.40.50.140">
    <property type="entry name" value="Nucleic acid-binding proteins"/>
    <property type="match status" value="1"/>
</dbReference>
<dbReference type="Gene3D" id="4.10.950.10">
    <property type="entry name" value="Ribosomal protein L2, domain 3"/>
    <property type="match status" value="1"/>
</dbReference>
<dbReference type="HAMAP" id="MF_01320_B">
    <property type="entry name" value="Ribosomal_uL2_B"/>
    <property type="match status" value="1"/>
</dbReference>
<dbReference type="InterPro" id="IPR012340">
    <property type="entry name" value="NA-bd_OB-fold"/>
</dbReference>
<dbReference type="InterPro" id="IPR014722">
    <property type="entry name" value="Rib_uL2_dom2"/>
</dbReference>
<dbReference type="InterPro" id="IPR002171">
    <property type="entry name" value="Ribosomal_uL2"/>
</dbReference>
<dbReference type="InterPro" id="IPR005880">
    <property type="entry name" value="Ribosomal_uL2_bac/org-type"/>
</dbReference>
<dbReference type="InterPro" id="IPR022669">
    <property type="entry name" value="Ribosomal_uL2_C"/>
</dbReference>
<dbReference type="InterPro" id="IPR022671">
    <property type="entry name" value="Ribosomal_uL2_CS"/>
</dbReference>
<dbReference type="InterPro" id="IPR014726">
    <property type="entry name" value="Ribosomal_uL2_dom3"/>
</dbReference>
<dbReference type="InterPro" id="IPR022666">
    <property type="entry name" value="Ribosomal_uL2_RNA-bd_dom"/>
</dbReference>
<dbReference type="InterPro" id="IPR008991">
    <property type="entry name" value="Translation_prot_SH3-like_sf"/>
</dbReference>
<dbReference type="NCBIfam" id="TIGR01171">
    <property type="entry name" value="rplB_bact"/>
    <property type="match status" value="1"/>
</dbReference>
<dbReference type="PANTHER" id="PTHR13691:SF5">
    <property type="entry name" value="LARGE RIBOSOMAL SUBUNIT PROTEIN UL2M"/>
    <property type="match status" value="1"/>
</dbReference>
<dbReference type="PANTHER" id="PTHR13691">
    <property type="entry name" value="RIBOSOMAL PROTEIN L2"/>
    <property type="match status" value="1"/>
</dbReference>
<dbReference type="Pfam" id="PF00181">
    <property type="entry name" value="Ribosomal_L2"/>
    <property type="match status" value="1"/>
</dbReference>
<dbReference type="Pfam" id="PF03947">
    <property type="entry name" value="Ribosomal_L2_C"/>
    <property type="match status" value="1"/>
</dbReference>
<dbReference type="PIRSF" id="PIRSF002158">
    <property type="entry name" value="Ribosomal_L2"/>
    <property type="match status" value="1"/>
</dbReference>
<dbReference type="SMART" id="SM01383">
    <property type="entry name" value="Ribosomal_L2"/>
    <property type="match status" value="1"/>
</dbReference>
<dbReference type="SMART" id="SM01382">
    <property type="entry name" value="Ribosomal_L2_C"/>
    <property type="match status" value="1"/>
</dbReference>
<dbReference type="SUPFAM" id="SSF50249">
    <property type="entry name" value="Nucleic acid-binding proteins"/>
    <property type="match status" value="1"/>
</dbReference>
<dbReference type="SUPFAM" id="SSF50104">
    <property type="entry name" value="Translation proteins SH3-like domain"/>
    <property type="match status" value="1"/>
</dbReference>
<dbReference type="PROSITE" id="PS00467">
    <property type="entry name" value="RIBOSOMAL_L2"/>
    <property type="match status" value="1"/>
</dbReference>
<comment type="function">
    <text evidence="1">One of the primary rRNA binding proteins. Required for association of the 30S and 50S subunits to form the 70S ribosome, for tRNA binding and peptide bond formation. It has been suggested to have peptidyltransferase activity; this is somewhat controversial. Makes several contacts with the 16S rRNA in the 70S ribosome.</text>
</comment>
<comment type="subunit">
    <text evidence="1">Part of the 50S ribosomal subunit. Forms a bridge to the 30S subunit in the 70S ribosome.</text>
</comment>
<comment type="similarity">
    <text evidence="1">Belongs to the universal ribosomal protein uL2 family.</text>
</comment>
<sequence>MGIKKYNPTTNGRRNMTTNDFAEITTDRPEKSLLAPLSKKAGRNNQGKITVRHQGGGHKRQYRIIDFKRNKDGIPGRVATIEYDPNRSANIALINYVDGEKRYILAPKSLEVGMEVMSGPEADIKIGNALPLINIPVGTVVHNIELKPGRGGQLVRSAGTSAQVLGKEGKYVLVRLTSGEVRLVLSACRASIGQVGNEQHELIKIGKAGRSRWLGKRPTVRGSVMNPVDHPHGGGEGRSPIGRKSPMSPWGKPTLGFKTRKKNKASDKFIVRRRKK</sequence>
<protein>
    <recommendedName>
        <fullName evidence="1">Large ribosomal subunit protein uL2</fullName>
    </recommendedName>
    <alternativeName>
        <fullName evidence="3">50S ribosomal protein L2</fullName>
    </alternativeName>
</protein>
<evidence type="ECO:0000255" key="1">
    <source>
        <dbReference type="HAMAP-Rule" id="MF_01320"/>
    </source>
</evidence>
<evidence type="ECO:0000256" key="2">
    <source>
        <dbReference type="SAM" id="MobiDB-lite"/>
    </source>
</evidence>
<evidence type="ECO:0000305" key="3"/>
<gene>
    <name evidence="1" type="primary">rplB</name>
    <name type="ordered locus">BC_0134</name>
</gene>